<dbReference type="EC" id="2.3.2.27" evidence="5"/>
<dbReference type="EMBL" id="DQ494789">
    <property type="protein sequence ID" value="ABF50942.1"/>
    <property type="molecule type" value="mRNA"/>
</dbReference>
<dbReference type="EMBL" id="AY359092">
    <property type="protein sequence ID" value="AAQ89450.1"/>
    <property type="molecule type" value="mRNA"/>
</dbReference>
<dbReference type="EMBL" id="AK025971">
    <property type="protein sequence ID" value="BAB15303.1"/>
    <property type="status" value="ALT_INIT"/>
    <property type="molecule type" value="mRNA"/>
</dbReference>
<dbReference type="EMBL" id="AK125337">
    <property type="protein sequence ID" value="BAG54186.1"/>
    <property type="molecule type" value="mRNA"/>
</dbReference>
<dbReference type="EMBL" id="AL713670">
    <property type="protein sequence ID" value="CAD28476.1"/>
    <property type="molecule type" value="mRNA"/>
</dbReference>
<dbReference type="EMBL" id="CH471165">
    <property type="protein sequence ID" value="EAW53849.1"/>
    <property type="molecule type" value="Genomic_DNA"/>
</dbReference>
<dbReference type="EMBL" id="CH471165">
    <property type="protein sequence ID" value="EAW53850.1"/>
    <property type="molecule type" value="Genomic_DNA"/>
</dbReference>
<dbReference type="EMBL" id="BC009911">
    <property type="protein sequence ID" value="AAH09911.1"/>
    <property type="molecule type" value="mRNA"/>
</dbReference>
<dbReference type="CCDS" id="CCDS4431.1">
    <molecule id="Q96G75-1"/>
</dbReference>
<dbReference type="RefSeq" id="NP_001275723.1">
    <molecule id="Q96G75-1"/>
    <property type="nucleotide sequence ID" value="NM_001288794.2"/>
</dbReference>
<dbReference type="RefSeq" id="NP_001275724.1">
    <property type="nucleotide sequence ID" value="NM_001288795.1"/>
</dbReference>
<dbReference type="RefSeq" id="NP_073599.2">
    <molecule id="Q96G75-1"/>
    <property type="nucleotide sequence ID" value="NM_022762.4"/>
</dbReference>
<dbReference type="RefSeq" id="XP_005266026.1">
    <molecule id="Q96G75-1"/>
    <property type="nucleotide sequence ID" value="XM_005265969.5"/>
</dbReference>
<dbReference type="RefSeq" id="XP_005266028.1">
    <property type="nucleotide sequence ID" value="XM_005265971.4"/>
</dbReference>
<dbReference type="RefSeq" id="XP_005266029.1">
    <molecule id="Q96G75-2"/>
    <property type="nucleotide sequence ID" value="XM_005265972.4"/>
</dbReference>
<dbReference type="RefSeq" id="XP_016865216.1">
    <property type="nucleotide sequence ID" value="XM_017009727.1"/>
</dbReference>
<dbReference type="RefSeq" id="XP_016865217.1">
    <molecule id="Q96G75-2"/>
    <property type="nucleotide sequence ID" value="XM_017009728.2"/>
</dbReference>
<dbReference type="RefSeq" id="XP_047273481.1">
    <molecule id="Q96G75-1"/>
    <property type="nucleotide sequence ID" value="XM_047417525.1"/>
</dbReference>
<dbReference type="RefSeq" id="XP_047273482.1">
    <molecule id="Q96G75-1"/>
    <property type="nucleotide sequence ID" value="XM_047417526.1"/>
</dbReference>
<dbReference type="RefSeq" id="XP_054209114.1">
    <molecule id="Q96G75-1"/>
    <property type="nucleotide sequence ID" value="XM_054353139.1"/>
</dbReference>
<dbReference type="RefSeq" id="XP_054209115.1">
    <molecule id="Q96G75-1"/>
    <property type="nucleotide sequence ID" value="XM_054353140.1"/>
</dbReference>
<dbReference type="RefSeq" id="XP_054209116.1">
    <molecule id="Q96G75-1"/>
    <property type="nucleotide sequence ID" value="XM_054353141.1"/>
</dbReference>
<dbReference type="RefSeq" id="XP_054209117.1">
    <molecule id="Q96G75-2"/>
    <property type="nucleotide sequence ID" value="XM_054353142.1"/>
</dbReference>
<dbReference type="RefSeq" id="XP_054209118.1">
    <molecule id="Q96G75-2"/>
    <property type="nucleotide sequence ID" value="XM_054353143.1"/>
</dbReference>
<dbReference type="SMR" id="Q96G75"/>
<dbReference type="BioGRID" id="122287">
    <property type="interactions" value="50"/>
</dbReference>
<dbReference type="ComplexPortal" id="CPX-7901">
    <property type="entry name" value="GID E3 ubiquitin ligase complex, RMND5B-RANBP9 variant"/>
</dbReference>
<dbReference type="ComplexPortal" id="CPX-7903">
    <property type="entry name" value="GID E3 ubiquitin ligase complex, RMND5B-RANBP10 variant"/>
</dbReference>
<dbReference type="CORUM" id="Q96G75"/>
<dbReference type="FunCoup" id="Q96G75">
    <property type="interactions" value="2060"/>
</dbReference>
<dbReference type="IntAct" id="Q96G75">
    <property type="interactions" value="42"/>
</dbReference>
<dbReference type="MINT" id="Q96G75"/>
<dbReference type="STRING" id="9606.ENSP00000420875"/>
<dbReference type="iPTMnet" id="Q96G75"/>
<dbReference type="PhosphoSitePlus" id="Q96G75"/>
<dbReference type="BioMuta" id="RMND5B"/>
<dbReference type="DMDM" id="29840869"/>
<dbReference type="jPOST" id="Q96G75"/>
<dbReference type="MassIVE" id="Q96G75"/>
<dbReference type="PaxDb" id="9606-ENSP00000420875"/>
<dbReference type="PeptideAtlas" id="Q96G75"/>
<dbReference type="ProteomicsDB" id="76601">
    <molecule id="Q96G75-1"/>
</dbReference>
<dbReference type="ProteomicsDB" id="76602">
    <molecule id="Q96G75-2"/>
</dbReference>
<dbReference type="Pumba" id="Q96G75"/>
<dbReference type="Antibodypedia" id="46079">
    <property type="antibodies" value="93 antibodies from 22 providers"/>
</dbReference>
<dbReference type="DNASU" id="64777"/>
<dbReference type="Ensembl" id="ENST00000313386.9">
    <molecule id="Q96G75-1"/>
    <property type="protein sequence ID" value="ENSP00000320623.4"/>
    <property type="gene ID" value="ENSG00000145916.19"/>
</dbReference>
<dbReference type="Ensembl" id="ENST00000515098.5">
    <molecule id="Q96G75-1"/>
    <property type="protein sequence ID" value="ENSP00000420875.1"/>
    <property type="gene ID" value="ENSG00000145916.19"/>
</dbReference>
<dbReference type="GeneID" id="64777"/>
<dbReference type="KEGG" id="hsa:64777"/>
<dbReference type="MANE-Select" id="ENST00000313386.9">
    <property type="protein sequence ID" value="ENSP00000320623.4"/>
    <property type="RefSeq nucleotide sequence ID" value="NM_022762.5"/>
    <property type="RefSeq protein sequence ID" value="NP_073599.2"/>
</dbReference>
<dbReference type="UCSC" id="uc003mim.5">
    <molecule id="Q96G75-1"/>
    <property type="organism name" value="human"/>
</dbReference>
<dbReference type="AGR" id="HGNC:26181"/>
<dbReference type="CTD" id="64777"/>
<dbReference type="DisGeNET" id="64777"/>
<dbReference type="GeneCards" id="RMND5B"/>
<dbReference type="HGNC" id="HGNC:26181">
    <property type="gene designation" value="RMND5B"/>
</dbReference>
<dbReference type="HPA" id="ENSG00000145916">
    <property type="expression patterns" value="Low tissue specificity"/>
</dbReference>
<dbReference type="MalaCards" id="RMND5B"/>
<dbReference type="neXtProt" id="NX_Q96G75"/>
<dbReference type="OpenTargets" id="ENSG00000145916"/>
<dbReference type="PharmGKB" id="PA144596389"/>
<dbReference type="VEuPathDB" id="HostDB:ENSG00000145916"/>
<dbReference type="eggNOG" id="KOG2817">
    <property type="taxonomic scope" value="Eukaryota"/>
</dbReference>
<dbReference type="GeneTree" id="ENSGT00940000153203"/>
<dbReference type="HOGENOM" id="CLU_020227_3_1_1"/>
<dbReference type="InParanoid" id="Q96G75"/>
<dbReference type="OMA" id="LIRECKM"/>
<dbReference type="OrthoDB" id="1933281at2759"/>
<dbReference type="PAN-GO" id="Q96G75">
    <property type="GO annotations" value="5 GO annotations based on evolutionary models"/>
</dbReference>
<dbReference type="PhylomeDB" id="Q96G75"/>
<dbReference type="TreeFam" id="TF315176"/>
<dbReference type="PathwayCommons" id="Q96G75"/>
<dbReference type="Reactome" id="R-HSA-9861718">
    <property type="pathway name" value="Regulation of pyruvate metabolism"/>
</dbReference>
<dbReference type="SignaLink" id="Q96G75"/>
<dbReference type="SIGNOR" id="Q96G75"/>
<dbReference type="BioGRID-ORCS" id="64777">
    <property type="hits" value="10 hits in 1149 CRISPR screens"/>
</dbReference>
<dbReference type="ChiTaRS" id="RMND5B">
    <property type="organism name" value="human"/>
</dbReference>
<dbReference type="GeneWiki" id="RMND5B"/>
<dbReference type="GenomeRNAi" id="64777"/>
<dbReference type="Pharos" id="Q96G75">
    <property type="development level" value="Tbio"/>
</dbReference>
<dbReference type="PRO" id="PR:Q96G75"/>
<dbReference type="Proteomes" id="UP000005640">
    <property type="component" value="Chromosome 5"/>
</dbReference>
<dbReference type="RNAct" id="Q96G75">
    <property type="molecule type" value="protein"/>
</dbReference>
<dbReference type="Bgee" id="ENSG00000145916">
    <property type="expression patterns" value="Expressed in lower esophagus mucosa and 198 other cell types or tissues"/>
</dbReference>
<dbReference type="ExpressionAtlas" id="Q96G75">
    <property type="expression patterns" value="baseline and differential"/>
</dbReference>
<dbReference type="GO" id="GO:0005737">
    <property type="term" value="C:cytoplasm"/>
    <property type="evidence" value="ECO:0000318"/>
    <property type="project" value="GO_Central"/>
</dbReference>
<dbReference type="GO" id="GO:0005829">
    <property type="term" value="C:cytosol"/>
    <property type="evidence" value="ECO:0000314"/>
    <property type="project" value="UniProtKB"/>
</dbReference>
<dbReference type="GO" id="GO:0034657">
    <property type="term" value="C:GID complex"/>
    <property type="evidence" value="ECO:0000318"/>
    <property type="project" value="GO_Central"/>
</dbReference>
<dbReference type="GO" id="GO:0005634">
    <property type="term" value="C:nucleus"/>
    <property type="evidence" value="ECO:0000318"/>
    <property type="project" value="GO_Central"/>
</dbReference>
<dbReference type="GO" id="GO:0061630">
    <property type="term" value="F:ubiquitin protein ligase activity"/>
    <property type="evidence" value="ECO:0007669"/>
    <property type="project" value="InterPro"/>
</dbReference>
<dbReference type="GO" id="GO:0008270">
    <property type="term" value="F:zinc ion binding"/>
    <property type="evidence" value="ECO:0007669"/>
    <property type="project" value="UniProtKB-KW"/>
</dbReference>
<dbReference type="GO" id="GO:0043161">
    <property type="term" value="P:proteasome-mediated ubiquitin-dependent protein catabolic process"/>
    <property type="evidence" value="ECO:0000318"/>
    <property type="project" value="GO_Central"/>
</dbReference>
<dbReference type="CDD" id="cd16795">
    <property type="entry name" value="dRING_RMD5B"/>
    <property type="match status" value="1"/>
</dbReference>
<dbReference type="FunFam" id="3.30.40.10:FF:000143">
    <property type="entry name" value="Regulator of gluconeogenesis Rmd5"/>
    <property type="match status" value="1"/>
</dbReference>
<dbReference type="InterPro" id="IPR013144">
    <property type="entry name" value="CRA_dom"/>
</dbReference>
<dbReference type="InterPro" id="IPR024964">
    <property type="entry name" value="CTLH/CRA"/>
</dbReference>
<dbReference type="InterPro" id="IPR006595">
    <property type="entry name" value="CTLH_C"/>
</dbReference>
<dbReference type="InterPro" id="IPR045098">
    <property type="entry name" value="Fyv10_fam"/>
</dbReference>
<dbReference type="InterPro" id="IPR006594">
    <property type="entry name" value="LisH"/>
</dbReference>
<dbReference type="InterPro" id="IPR037681">
    <property type="entry name" value="RMD5B_dRING"/>
</dbReference>
<dbReference type="InterPro" id="IPR044063">
    <property type="entry name" value="ZF_RING_GID"/>
</dbReference>
<dbReference type="InterPro" id="IPR027370">
    <property type="entry name" value="Znf-RING_euk"/>
</dbReference>
<dbReference type="PANTHER" id="PTHR12170:SF6">
    <property type="entry name" value="E3 UBIQUITIN-PROTEIN TRANSFERASE RMND5B"/>
    <property type="match status" value="1"/>
</dbReference>
<dbReference type="PANTHER" id="PTHR12170">
    <property type="entry name" value="MACROPHAGE ERYTHROBLAST ATTACHER-RELATED"/>
    <property type="match status" value="1"/>
</dbReference>
<dbReference type="Pfam" id="PF10607">
    <property type="entry name" value="CTLH"/>
    <property type="match status" value="1"/>
</dbReference>
<dbReference type="Pfam" id="PF13445">
    <property type="entry name" value="zf-RING_UBOX"/>
    <property type="match status" value="1"/>
</dbReference>
<dbReference type="SMART" id="SM00757">
    <property type="entry name" value="CRA"/>
    <property type="match status" value="1"/>
</dbReference>
<dbReference type="SMART" id="SM00668">
    <property type="entry name" value="CTLH"/>
    <property type="match status" value="1"/>
</dbReference>
<dbReference type="SMART" id="SM00667">
    <property type="entry name" value="LisH"/>
    <property type="match status" value="1"/>
</dbReference>
<dbReference type="SUPFAM" id="SSF57850">
    <property type="entry name" value="RING/U-box"/>
    <property type="match status" value="1"/>
</dbReference>
<dbReference type="PROSITE" id="PS50897">
    <property type="entry name" value="CTLH"/>
    <property type="match status" value="1"/>
</dbReference>
<dbReference type="PROSITE" id="PS50896">
    <property type="entry name" value="LISH"/>
    <property type="match status" value="1"/>
</dbReference>
<dbReference type="PROSITE" id="PS51867">
    <property type="entry name" value="ZF_RING_GID"/>
    <property type="match status" value="1"/>
</dbReference>
<organism>
    <name type="scientific">Homo sapiens</name>
    <name type="common">Human</name>
    <dbReference type="NCBI Taxonomy" id="9606"/>
    <lineage>
        <taxon>Eukaryota</taxon>
        <taxon>Metazoa</taxon>
        <taxon>Chordata</taxon>
        <taxon>Craniata</taxon>
        <taxon>Vertebrata</taxon>
        <taxon>Euteleostomi</taxon>
        <taxon>Mammalia</taxon>
        <taxon>Eutheria</taxon>
        <taxon>Euarchontoglires</taxon>
        <taxon>Primates</taxon>
        <taxon>Haplorrhini</taxon>
        <taxon>Catarrhini</taxon>
        <taxon>Hominidae</taxon>
        <taxon>Homo</taxon>
    </lineage>
</organism>
<reference key="1">
    <citation type="submission" date="2006-04" db="EMBL/GenBank/DDBJ databases">
        <title>A novel human gene RMND5B.</title>
        <authorList>
            <person name="Tang W."/>
            <person name="Yuan W."/>
            <person name="Wu X."/>
        </authorList>
    </citation>
    <scope>NUCLEOTIDE SEQUENCE [MRNA] (ISOFORM 1)</scope>
</reference>
<reference key="2">
    <citation type="journal article" date="2003" name="Genome Res.">
        <title>The secreted protein discovery initiative (SPDI), a large-scale effort to identify novel human secreted and transmembrane proteins: a bioinformatics assessment.</title>
        <authorList>
            <person name="Clark H.F."/>
            <person name="Gurney A.L."/>
            <person name="Abaya E."/>
            <person name="Baker K."/>
            <person name="Baldwin D.T."/>
            <person name="Brush J."/>
            <person name="Chen J."/>
            <person name="Chow B."/>
            <person name="Chui C."/>
            <person name="Crowley C."/>
            <person name="Currell B."/>
            <person name="Deuel B."/>
            <person name="Dowd P."/>
            <person name="Eaton D."/>
            <person name="Foster J.S."/>
            <person name="Grimaldi C."/>
            <person name="Gu Q."/>
            <person name="Hass P.E."/>
            <person name="Heldens S."/>
            <person name="Huang A."/>
            <person name="Kim H.S."/>
            <person name="Klimowski L."/>
            <person name="Jin Y."/>
            <person name="Johnson S."/>
            <person name="Lee J."/>
            <person name="Lewis L."/>
            <person name="Liao D."/>
            <person name="Mark M.R."/>
            <person name="Robbie E."/>
            <person name="Sanchez C."/>
            <person name="Schoenfeld J."/>
            <person name="Seshagiri S."/>
            <person name="Simmons L."/>
            <person name="Singh J."/>
            <person name="Smith V."/>
            <person name="Stinson J."/>
            <person name="Vagts A."/>
            <person name="Vandlen R.L."/>
            <person name="Watanabe C."/>
            <person name="Wieand D."/>
            <person name="Woods K."/>
            <person name="Xie M.-H."/>
            <person name="Yansura D.G."/>
            <person name="Yi S."/>
            <person name="Yu G."/>
            <person name="Yuan J."/>
            <person name="Zhang M."/>
            <person name="Zhang Z."/>
            <person name="Goddard A.D."/>
            <person name="Wood W.I."/>
            <person name="Godowski P.J."/>
            <person name="Gray A.M."/>
        </authorList>
    </citation>
    <scope>NUCLEOTIDE SEQUENCE [LARGE SCALE MRNA] (ISOFORM 2)</scope>
</reference>
<reference key="3">
    <citation type="journal article" date="2004" name="Nat. Genet.">
        <title>Complete sequencing and characterization of 21,243 full-length human cDNAs.</title>
        <authorList>
            <person name="Ota T."/>
            <person name="Suzuki Y."/>
            <person name="Nishikawa T."/>
            <person name="Otsuki T."/>
            <person name="Sugiyama T."/>
            <person name="Irie R."/>
            <person name="Wakamatsu A."/>
            <person name="Hayashi K."/>
            <person name="Sato H."/>
            <person name="Nagai K."/>
            <person name="Kimura K."/>
            <person name="Makita H."/>
            <person name="Sekine M."/>
            <person name="Obayashi M."/>
            <person name="Nishi T."/>
            <person name="Shibahara T."/>
            <person name="Tanaka T."/>
            <person name="Ishii S."/>
            <person name="Yamamoto J."/>
            <person name="Saito K."/>
            <person name="Kawai Y."/>
            <person name="Isono Y."/>
            <person name="Nakamura Y."/>
            <person name="Nagahari K."/>
            <person name="Murakami K."/>
            <person name="Yasuda T."/>
            <person name="Iwayanagi T."/>
            <person name="Wagatsuma M."/>
            <person name="Shiratori A."/>
            <person name="Sudo H."/>
            <person name="Hosoiri T."/>
            <person name="Kaku Y."/>
            <person name="Kodaira H."/>
            <person name="Kondo H."/>
            <person name="Sugawara M."/>
            <person name="Takahashi M."/>
            <person name="Kanda K."/>
            <person name="Yokoi T."/>
            <person name="Furuya T."/>
            <person name="Kikkawa E."/>
            <person name="Omura Y."/>
            <person name="Abe K."/>
            <person name="Kamihara K."/>
            <person name="Katsuta N."/>
            <person name="Sato K."/>
            <person name="Tanikawa M."/>
            <person name="Yamazaki M."/>
            <person name="Ninomiya K."/>
            <person name="Ishibashi T."/>
            <person name="Yamashita H."/>
            <person name="Murakawa K."/>
            <person name="Fujimori K."/>
            <person name="Tanai H."/>
            <person name="Kimata M."/>
            <person name="Watanabe M."/>
            <person name="Hiraoka S."/>
            <person name="Chiba Y."/>
            <person name="Ishida S."/>
            <person name="Ono Y."/>
            <person name="Takiguchi S."/>
            <person name="Watanabe S."/>
            <person name="Yosida M."/>
            <person name="Hotuta T."/>
            <person name="Kusano J."/>
            <person name="Kanehori K."/>
            <person name="Takahashi-Fujii A."/>
            <person name="Hara H."/>
            <person name="Tanase T.-O."/>
            <person name="Nomura Y."/>
            <person name="Togiya S."/>
            <person name="Komai F."/>
            <person name="Hara R."/>
            <person name="Takeuchi K."/>
            <person name="Arita M."/>
            <person name="Imose N."/>
            <person name="Musashino K."/>
            <person name="Yuuki H."/>
            <person name="Oshima A."/>
            <person name="Sasaki N."/>
            <person name="Aotsuka S."/>
            <person name="Yoshikawa Y."/>
            <person name="Matsunawa H."/>
            <person name="Ichihara T."/>
            <person name="Shiohata N."/>
            <person name="Sano S."/>
            <person name="Moriya S."/>
            <person name="Momiyama H."/>
            <person name="Satoh N."/>
            <person name="Takami S."/>
            <person name="Terashima Y."/>
            <person name="Suzuki O."/>
            <person name="Nakagawa S."/>
            <person name="Senoh A."/>
            <person name="Mizoguchi H."/>
            <person name="Goto Y."/>
            <person name="Shimizu F."/>
            <person name="Wakebe H."/>
            <person name="Hishigaki H."/>
            <person name="Watanabe T."/>
            <person name="Sugiyama A."/>
            <person name="Takemoto M."/>
            <person name="Kawakami B."/>
            <person name="Yamazaki M."/>
            <person name="Watanabe K."/>
            <person name="Kumagai A."/>
            <person name="Itakura S."/>
            <person name="Fukuzumi Y."/>
            <person name="Fujimori Y."/>
            <person name="Komiyama M."/>
            <person name="Tashiro H."/>
            <person name="Tanigami A."/>
            <person name="Fujiwara T."/>
            <person name="Ono T."/>
            <person name="Yamada K."/>
            <person name="Fujii Y."/>
            <person name="Ozaki K."/>
            <person name="Hirao M."/>
            <person name="Ohmori Y."/>
            <person name="Kawabata A."/>
            <person name="Hikiji T."/>
            <person name="Kobatake N."/>
            <person name="Inagaki H."/>
            <person name="Ikema Y."/>
            <person name="Okamoto S."/>
            <person name="Okitani R."/>
            <person name="Kawakami T."/>
            <person name="Noguchi S."/>
            <person name="Itoh T."/>
            <person name="Shigeta K."/>
            <person name="Senba T."/>
            <person name="Matsumura K."/>
            <person name="Nakajima Y."/>
            <person name="Mizuno T."/>
            <person name="Morinaga M."/>
            <person name="Sasaki M."/>
            <person name="Togashi T."/>
            <person name="Oyama M."/>
            <person name="Hata H."/>
            <person name="Watanabe M."/>
            <person name="Komatsu T."/>
            <person name="Mizushima-Sugano J."/>
            <person name="Satoh T."/>
            <person name="Shirai Y."/>
            <person name="Takahashi Y."/>
            <person name="Nakagawa K."/>
            <person name="Okumura K."/>
            <person name="Nagase T."/>
            <person name="Nomura N."/>
            <person name="Kikuchi H."/>
            <person name="Masuho Y."/>
            <person name="Yamashita R."/>
            <person name="Nakai K."/>
            <person name="Yada T."/>
            <person name="Nakamura Y."/>
            <person name="Ohara O."/>
            <person name="Isogai T."/>
            <person name="Sugano S."/>
        </authorList>
    </citation>
    <scope>NUCLEOTIDE SEQUENCE [LARGE SCALE MRNA] (ISOFORM 1)</scope>
    <source>
        <tissue>Teratocarcinoma</tissue>
    </source>
</reference>
<reference key="4">
    <citation type="journal article" date="2007" name="BMC Genomics">
        <title>The full-ORF clone resource of the German cDNA consortium.</title>
        <authorList>
            <person name="Bechtel S."/>
            <person name="Rosenfelder H."/>
            <person name="Duda A."/>
            <person name="Schmidt C.P."/>
            <person name="Ernst U."/>
            <person name="Wellenreuther R."/>
            <person name="Mehrle A."/>
            <person name="Schuster C."/>
            <person name="Bahr A."/>
            <person name="Bloecker H."/>
            <person name="Heubner D."/>
            <person name="Hoerlein A."/>
            <person name="Michel G."/>
            <person name="Wedler H."/>
            <person name="Koehrer K."/>
            <person name="Ottenwaelder B."/>
            <person name="Poustka A."/>
            <person name="Wiemann S."/>
            <person name="Schupp I."/>
        </authorList>
    </citation>
    <scope>NUCLEOTIDE SEQUENCE [LARGE SCALE MRNA] (ISOFORM 1)</scope>
    <source>
        <tissue>Mammary cancer</tissue>
    </source>
</reference>
<reference key="5">
    <citation type="submission" date="2005-09" db="EMBL/GenBank/DDBJ databases">
        <authorList>
            <person name="Mural R.J."/>
            <person name="Istrail S."/>
            <person name="Sutton G.G."/>
            <person name="Florea L."/>
            <person name="Halpern A.L."/>
            <person name="Mobarry C.M."/>
            <person name="Lippert R."/>
            <person name="Walenz B."/>
            <person name="Shatkay H."/>
            <person name="Dew I."/>
            <person name="Miller J.R."/>
            <person name="Flanigan M.J."/>
            <person name="Edwards N.J."/>
            <person name="Bolanos R."/>
            <person name="Fasulo D."/>
            <person name="Halldorsson B.V."/>
            <person name="Hannenhalli S."/>
            <person name="Turner R."/>
            <person name="Yooseph S."/>
            <person name="Lu F."/>
            <person name="Nusskern D.R."/>
            <person name="Shue B.C."/>
            <person name="Zheng X.H."/>
            <person name="Zhong F."/>
            <person name="Delcher A.L."/>
            <person name="Huson D.H."/>
            <person name="Kravitz S.A."/>
            <person name="Mouchard L."/>
            <person name="Reinert K."/>
            <person name="Remington K.A."/>
            <person name="Clark A.G."/>
            <person name="Waterman M.S."/>
            <person name="Eichler E.E."/>
            <person name="Adams M.D."/>
            <person name="Hunkapiller M.W."/>
            <person name="Myers E.W."/>
            <person name="Venter J.C."/>
        </authorList>
    </citation>
    <scope>NUCLEOTIDE SEQUENCE [LARGE SCALE GENOMIC DNA]</scope>
</reference>
<reference key="6">
    <citation type="journal article" date="2004" name="Genome Res.">
        <title>The status, quality, and expansion of the NIH full-length cDNA project: the Mammalian Gene Collection (MGC).</title>
        <authorList>
            <consortium name="The MGC Project Team"/>
        </authorList>
    </citation>
    <scope>NUCLEOTIDE SEQUENCE [LARGE SCALE MRNA] (ISOFORM 1)</scope>
    <source>
        <tissue>Lung</tissue>
    </source>
</reference>
<reference key="7">
    <citation type="journal article" date="2012" name="Proc. Natl. Acad. Sci. U.S.A.">
        <title>N-terminal acetylome analyses and functional insights of the N-terminal acetyltransferase NatB.</title>
        <authorList>
            <person name="Van Damme P."/>
            <person name="Lasa M."/>
            <person name="Polevoda B."/>
            <person name="Gazquez C."/>
            <person name="Elosegui-Artola A."/>
            <person name="Kim D.S."/>
            <person name="De Juan-Pardo E."/>
            <person name="Demeyer K."/>
            <person name="Hole K."/>
            <person name="Larrea E."/>
            <person name="Timmerman E."/>
            <person name="Prieto J."/>
            <person name="Arnesen T."/>
            <person name="Sherman F."/>
            <person name="Gevaert K."/>
            <person name="Aldabe R."/>
        </authorList>
    </citation>
    <scope>ACETYLATION [LARGE SCALE ANALYSIS] AT MET-1</scope>
    <scope>IDENTIFICATION BY MASS SPECTROMETRY [LARGE SCALE ANALYSIS]</scope>
</reference>
<reference key="8">
    <citation type="journal article" date="2015" name="PLoS ONE">
        <title>RMND5 from Xenopus laevis is an E3 ubiquitin-ligase and functions in early embryonic forebrain development.</title>
        <authorList>
            <person name="Pfirrmann T."/>
            <person name="Villavicencio-Lorini P."/>
            <person name="Subudhi A.K."/>
            <person name="Menssen R."/>
            <person name="Wolf D.H."/>
            <person name="Hollemann T."/>
        </authorList>
    </citation>
    <scope>SUBCELLULAR LOCATION</scope>
</reference>
<reference key="9">
    <citation type="journal article" date="2018" name="Elife">
        <title>The multi-subunit GID/CTLH E3 ligase promotes proliferation and targets the transcription factor Hbp1 for degradation.</title>
        <authorList>
            <person name="Lampert F."/>
            <person name="Stafa D."/>
            <person name="Goga A."/>
            <person name="Soste M.V."/>
            <person name="Gilberto S."/>
            <person name="Olieric N."/>
            <person name="Picotti P."/>
            <person name="Stoffel M."/>
            <person name="Peter M."/>
        </authorList>
    </citation>
    <scope>FUNCTION</scope>
    <scope>IDENTIFICATION IN THE CTLH COMPLEX</scope>
    <scope>IDENTIFICATION BY MASS SPECTROMETRY</scope>
</reference>
<protein>
    <recommendedName>
        <fullName>E3 ubiquitin-protein transferase RMND5B</fullName>
        <ecNumber evidence="5">2.3.2.27</ecNumber>
    </recommendedName>
    <alternativeName>
        <fullName>Protein RMD5 homolog B</fullName>
    </alternativeName>
</protein>
<proteinExistence type="evidence at protein level"/>
<keyword id="KW-0007">Acetylation</keyword>
<keyword id="KW-0025">Alternative splicing</keyword>
<keyword id="KW-0963">Cytoplasm</keyword>
<keyword id="KW-0479">Metal-binding</keyword>
<keyword id="KW-1267">Proteomics identification</keyword>
<keyword id="KW-1185">Reference proteome</keyword>
<keyword id="KW-0808">Transferase</keyword>
<keyword id="KW-0833">Ubl conjugation pathway</keyword>
<keyword id="KW-0862">Zinc</keyword>
<keyword id="KW-0863">Zinc-finger</keyword>
<comment type="function">
    <text evidence="5">Core component of the CTLH E3 ubiquitin-protein ligase complex that selectively accepts ubiquitin from UBE2H and mediates ubiquitination and subsequent proteasomal degradation of the transcription factor HBP1. MAEA and RMND5A are both required for catalytic activity of the CTLH E3 ubiquitin-protein ligase complex (PubMed:29911972). Catalytic activity of the complex is required for normal cell proliferation (PubMed:29911972). The CTLH E3 ubiquitin-protein ligase complex is not required for the degradation of enzymes involved in gluconeogenesis, such as FBP1 (PubMed:29911972).</text>
</comment>
<comment type="catalytic activity">
    <reaction evidence="5">
        <text>S-ubiquitinyl-[E2 ubiquitin-conjugating enzyme]-L-cysteine + [acceptor protein]-L-lysine = [E2 ubiquitin-conjugating enzyme]-L-cysteine + N(6)-ubiquitinyl-[acceptor protein]-L-lysine.</text>
        <dbReference type="EC" id="2.3.2.27"/>
    </reaction>
</comment>
<comment type="subunit">
    <text evidence="5">Identified in the CTLH complex that contains GID4, RANBP9 and/or RANBP10, MKLN1, MAEA, RMND5A (or alternatively its paralog RMND5B), GID8, ARMC8, WDR26 and YPEL5 (PubMed:29911972). Within this complex, MAEA, RMND5A (or alternatively its paralog RMND5B), GID8, WDR26, and RANBP9 and/or RANBP10 form the catalytic core, while GID4, MKLN1, ARMC8 and YPEL5 have ancillary roles (PubMed:29911972).</text>
</comment>
<comment type="interaction">
    <interactant intactId="EBI-745055">
        <id>Q96G75</id>
    </interactant>
    <interactant intactId="EBI-5235340">
        <id>Q7Z699</id>
        <label>SPRED1</label>
    </interactant>
    <organismsDiffer>false</organismsDiffer>
    <experiments>3</experiments>
</comment>
<comment type="interaction">
    <interactant intactId="EBI-745055">
        <id>Q96G75</id>
    </interactant>
    <interactant intactId="EBI-372899">
        <id>Q13148</id>
        <label>TARDBP</label>
    </interactant>
    <organismsDiffer>false</organismsDiffer>
    <experiments>3</experiments>
</comment>
<comment type="subcellular location">
    <subcellularLocation>
        <location evidence="4">Cytoplasm</location>
        <location evidence="4">Cytosol</location>
    </subcellularLocation>
</comment>
<comment type="alternative products">
    <event type="alternative splicing"/>
    <isoform>
        <id>Q96G75-1</id>
        <name>1</name>
        <sequence type="displayed"/>
    </isoform>
    <isoform>
        <id>Q96G75-2</id>
        <name>2</name>
        <sequence type="described" ref="VSP_013174"/>
    </isoform>
</comment>
<comment type="sequence caution" evidence="7">
    <conflict type="erroneous initiation">
        <sequence resource="EMBL-CDS" id="BAB15303"/>
    </conflict>
</comment>
<feature type="chain" id="PRO_0000065709" description="E3 ubiquitin-protein transferase RMND5B">
    <location>
        <begin position="1"/>
        <end position="393"/>
    </location>
</feature>
<feature type="domain" description="LisH" evidence="2">
    <location>
        <begin position="116"/>
        <end position="148"/>
    </location>
</feature>
<feature type="domain" description="CTLH" evidence="1">
    <location>
        <begin position="155"/>
        <end position="212"/>
    </location>
</feature>
<feature type="zinc finger region" description="RING-Gid-type" evidence="3">
    <location>
        <begin position="338"/>
        <end position="379"/>
    </location>
</feature>
<feature type="modified residue" description="N-acetylmethionine" evidence="8">
    <location>
        <position position="1"/>
    </location>
</feature>
<feature type="splice variant" id="VSP_013174" description="In isoform 2." evidence="6">
    <location>
        <begin position="1"/>
        <end position="60"/>
    </location>
</feature>
<sequence>MEQCACVERELDKVLQKFLTYGQHCERSLEELLHYVGQLRAELASAALQGTPLSATLSLVMSQCCRKIKDTVQKLASDHKDIHSSVSRVGKAIDRNFDSEICGVVSDAVWDAREQQQQILQMAIVEHLYQQGMLSVAEELCQESTLNVDLDFKQPFLELNRILEALHEQDLGPALEWAVSHRQRLLELNSSLEFKLHRLHFIRLLAGGPAKQLEALSYARHFQPFARLHQREIQVMMGSLVYLRLGLEKSPYCHLLDSSHWAEICETFTRDACSLLGLSVESPLSVSFASGCVALPVLMNIKAVIEQRQCTGVWNHKDELPIEIELGMKCWYHSVFACPILRQQTSDSNPPIKLICGHVISRDALNKLINGGKLKCPYCPMEQNPADGKRIIF</sequence>
<gene>
    <name type="primary">RMND5B</name>
    <name type="ORF">UNQ2508/PRO5996</name>
</gene>
<accession>Q96G75</accession>
<accession>Q1HE27</accession>
<accession>Q6UVY7</accession>
<accession>Q9H6F6</accession>
<evidence type="ECO:0000255" key="1">
    <source>
        <dbReference type="PROSITE-ProRule" id="PRU00058"/>
    </source>
</evidence>
<evidence type="ECO:0000255" key="2">
    <source>
        <dbReference type="PROSITE-ProRule" id="PRU00126"/>
    </source>
</evidence>
<evidence type="ECO:0000255" key="3">
    <source>
        <dbReference type="PROSITE-ProRule" id="PRU01215"/>
    </source>
</evidence>
<evidence type="ECO:0000269" key="4">
    <source>
    </source>
</evidence>
<evidence type="ECO:0000269" key="5">
    <source>
    </source>
</evidence>
<evidence type="ECO:0000303" key="6">
    <source>
    </source>
</evidence>
<evidence type="ECO:0000305" key="7"/>
<evidence type="ECO:0007744" key="8">
    <source>
    </source>
</evidence>
<name>RMD5B_HUMAN</name>